<protein>
    <recommendedName>
        <fullName evidence="1">Large ribosomal subunit protein bL25</fullName>
    </recommendedName>
    <alternativeName>
        <fullName evidence="2">50S ribosomal protein L25</fullName>
    </alternativeName>
    <alternativeName>
        <fullName evidence="1">General stress protein CTC</fullName>
    </alternativeName>
</protein>
<feature type="chain" id="PRO_1000052867" description="Large ribosomal subunit protein bL25">
    <location>
        <begin position="1"/>
        <end position="198"/>
    </location>
</feature>
<dbReference type="EMBL" id="CP000139">
    <property type="protein sequence ID" value="ABR41434.1"/>
    <property type="molecule type" value="Genomic_DNA"/>
</dbReference>
<dbReference type="RefSeq" id="WP_005841626.1">
    <property type="nucleotide sequence ID" value="NZ_JANSWM010000023.1"/>
</dbReference>
<dbReference type="SMR" id="A6L6X0"/>
<dbReference type="STRING" id="435590.BVU_3823"/>
<dbReference type="PaxDb" id="435590-BVU_3823"/>
<dbReference type="GeneID" id="5304782"/>
<dbReference type="KEGG" id="bvu:BVU_3823"/>
<dbReference type="eggNOG" id="COG1825">
    <property type="taxonomic scope" value="Bacteria"/>
</dbReference>
<dbReference type="HOGENOM" id="CLU_075939_2_1_10"/>
<dbReference type="BioCyc" id="BVUL435590:G1G59-3959-MONOMER"/>
<dbReference type="Proteomes" id="UP000002861">
    <property type="component" value="Chromosome"/>
</dbReference>
<dbReference type="GO" id="GO:0022625">
    <property type="term" value="C:cytosolic large ribosomal subunit"/>
    <property type="evidence" value="ECO:0007669"/>
    <property type="project" value="TreeGrafter"/>
</dbReference>
<dbReference type="GO" id="GO:0008097">
    <property type="term" value="F:5S rRNA binding"/>
    <property type="evidence" value="ECO:0007669"/>
    <property type="project" value="InterPro"/>
</dbReference>
<dbReference type="GO" id="GO:0003735">
    <property type="term" value="F:structural constituent of ribosome"/>
    <property type="evidence" value="ECO:0007669"/>
    <property type="project" value="InterPro"/>
</dbReference>
<dbReference type="GO" id="GO:0006412">
    <property type="term" value="P:translation"/>
    <property type="evidence" value="ECO:0007669"/>
    <property type="project" value="UniProtKB-UniRule"/>
</dbReference>
<dbReference type="CDD" id="cd00495">
    <property type="entry name" value="Ribosomal_L25_TL5_CTC"/>
    <property type="match status" value="1"/>
</dbReference>
<dbReference type="Gene3D" id="2.170.120.20">
    <property type="entry name" value="Ribosomal protein L25, beta domain"/>
    <property type="match status" value="1"/>
</dbReference>
<dbReference type="Gene3D" id="2.40.240.10">
    <property type="entry name" value="Ribosomal Protein L25, Chain P"/>
    <property type="match status" value="1"/>
</dbReference>
<dbReference type="HAMAP" id="MF_01334">
    <property type="entry name" value="Ribosomal_bL25_CTC"/>
    <property type="match status" value="1"/>
</dbReference>
<dbReference type="InterPro" id="IPR020056">
    <property type="entry name" value="Rbsml_bL25/Gln-tRNA_synth_N"/>
</dbReference>
<dbReference type="InterPro" id="IPR011035">
    <property type="entry name" value="Ribosomal_bL25/Gln-tRNA_synth"/>
</dbReference>
<dbReference type="InterPro" id="IPR020057">
    <property type="entry name" value="Ribosomal_bL25_b-dom"/>
</dbReference>
<dbReference type="InterPro" id="IPR037121">
    <property type="entry name" value="Ribosomal_bL25_C"/>
</dbReference>
<dbReference type="InterPro" id="IPR001021">
    <property type="entry name" value="Ribosomal_bL25_long"/>
</dbReference>
<dbReference type="InterPro" id="IPR029751">
    <property type="entry name" value="Ribosomal_L25_dom"/>
</dbReference>
<dbReference type="InterPro" id="IPR020930">
    <property type="entry name" value="Ribosomal_uL5_bac-type"/>
</dbReference>
<dbReference type="NCBIfam" id="TIGR00731">
    <property type="entry name" value="bL25_bact_ctc"/>
    <property type="match status" value="1"/>
</dbReference>
<dbReference type="NCBIfam" id="NF004132">
    <property type="entry name" value="PRK05618.2-2"/>
    <property type="match status" value="1"/>
</dbReference>
<dbReference type="PANTHER" id="PTHR33284">
    <property type="entry name" value="RIBOSOMAL PROTEIN L25/GLN-TRNA SYNTHETASE, ANTI-CODON-BINDING DOMAIN-CONTAINING PROTEIN"/>
    <property type="match status" value="1"/>
</dbReference>
<dbReference type="PANTHER" id="PTHR33284:SF1">
    <property type="entry name" value="RIBOSOMAL PROTEIN L25_GLN-TRNA SYNTHETASE, ANTI-CODON-BINDING DOMAIN-CONTAINING PROTEIN"/>
    <property type="match status" value="1"/>
</dbReference>
<dbReference type="Pfam" id="PF01386">
    <property type="entry name" value="Ribosomal_L25p"/>
    <property type="match status" value="1"/>
</dbReference>
<dbReference type="Pfam" id="PF14693">
    <property type="entry name" value="Ribosomal_TL5_C"/>
    <property type="match status" value="1"/>
</dbReference>
<dbReference type="SUPFAM" id="SSF50715">
    <property type="entry name" value="Ribosomal protein L25-like"/>
    <property type="match status" value="1"/>
</dbReference>
<name>RL25_PHOV8</name>
<organism>
    <name type="scientific">Phocaeicola vulgatus (strain ATCC 8482 / DSM 1447 / JCM 5826 / CCUG 4940 / NBRC 14291 / NCTC 11154)</name>
    <name type="common">Bacteroides vulgatus</name>
    <dbReference type="NCBI Taxonomy" id="435590"/>
    <lineage>
        <taxon>Bacteria</taxon>
        <taxon>Pseudomonadati</taxon>
        <taxon>Bacteroidota</taxon>
        <taxon>Bacteroidia</taxon>
        <taxon>Bacteroidales</taxon>
        <taxon>Bacteroidaceae</taxon>
        <taxon>Phocaeicola</taxon>
    </lineage>
</organism>
<accession>A6L6X0</accession>
<evidence type="ECO:0000255" key="1">
    <source>
        <dbReference type="HAMAP-Rule" id="MF_01334"/>
    </source>
</evidence>
<evidence type="ECO:0000305" key="2"/>
<sequence>MKSIEIKGTVRTDVGKKATHELRKNNGVPCVLYGVQKDENGLPVATHFSVPTEGLRNLVYTPHIYVVDLNIDGKIVNAILKDIQFHPVTDAILHVDFYQIDEAKPIVMEVPVQLEGLAEGVRAGGKLALQLRKLKVKALYNVIPERLVVDVTSLGLGKTVKVGELSYEGLELINAKEAVVCAVKLTRAARGAAATAGK</sequence>
<comment type="function">
    <text evidence="1">This is one of the proteins that binds to the 5S RNA in the ribosome where it forms part of the central protuberance.</text>
</comment>
<comment type="subunit">
    <text evidence="1">Part of the 50S ribosomal subunit; part of the 5S rRNA/L5/L18/L25 subcomplex. Contacts the 5S rRNA. Binds to the 5S rRNA independently of L5 and L18.</text>
</comment>
<comment type="similarity">
    <text evidence="1">Belongs to the bacterial ribosomal protein bL25 family. CTC subfamily.</text>
</comment>
<proteinExistence type="inferred from homology"/>
<reference key="1">
    <citation type="journal article" date="2007" name="PLoS Biol.">
        <title>Evolution of symbiotic bacteria in the distal human intestine.</title>
        <authorList>
            <person name="Xu J."/>
            <person name="Mahowald M.A."/>
            <person name="Ley R.E."/>
            <person name="Lozupone C.A."/>
            <person name="Hamady M."/>
            <person name="Martens E.C."/>
            <person name="Henrissat B."/>
            <person name="Coutinho P.M."/>
            <person name="Minx P."/>
            <person name="Latreille P."/>
            <person name="Cordum H."/>
            <person name="Van Brunt A."/>
            <person name="Kim K."/>
            <person name="Fulton R.S."/>
            <person name="Fulton L.A."/>
            <person name="Clifton S.W."/>
            <person name="Wilson R.K."/>
            <person name="Knight R.D."/>
            <person name="Gordon J.I."/>
        </authorList>
    </citation>
    <scope>NUCLEOTIDE SEQUENCE [LARGE SCALE GENOMIC DNA]</scope>
    <source>
        <strain>ATCC 8482 / DSM 1447 / JCM 5826 / CCUG 4940 / NBRC 14291 / NCTC 11154</strain>
    </source>
</reference>
<keyword id="KW-0687">Ribonucleoprotein</keyword>
<keyword id="KW-0689">Ribosomal protein</keyword>
<keyword id="KW-0694">RNA-binding</keyword>
<keyword id="KW-0699">rRNA-binding</keyword>
<gene>
    <name evidence="1" type="primary">rplY</name>
    <name evidence="1" type="synonym">ctc</name>
    <name type="ordered locus">BVU_3823</name>
</gene>